<organism>
    <name type="scientific">Mus musculus</name>
    <name type="common">Mouse</name>
    <dbReference type="NCBI Taxonomy" id="10090"/>
    <lineage>
        <taxon>Eukaryota</taxon>
        <taxon>Metazoa</taxon>
        <taxon>Chordata</taxon>
        <taxon>Craniata</taxon>
        <taxon>Vertebrata</taxon>
        <taxon>Euteleostomi</taxon>
        <taxon>Mammalia</taxon>
        <taxon>Eutheria</taxon>
        <taxon>Euarchontoglires</taxon>
        <taxon>Glires</taxon>
        <taxon>Rodentia</taxon>
        <taxon>Myomorpha</taxon>
        <taxon>Muroidea</taxon>
        <taxon>Muridae</taxon>
        <taxon>Murinae</taxon>
        <taxon>Mus</taxon>
        <taxon>Mus</taxon>
    </lineage>
</organism>
<comment type="function">
    <text evidence="1">Catalyzes the initial reaction in O-linked oligosaccharide biosynthesis, the transfer of an N-acetyl-D-galactosamine residue to a serine or threonine residue on the protein receptor.</text>
</comment>
<comment type="catalytic activity">
    <reaction>
        <text>L-seryl-[protein] + UDP-N-acetyl-alpha-D-galactosamine = a 3-O-[N-acetyl-alpha-D-galactosaminyl]-L-seryl-[protein] + UDP + H(+)</text>
        <dbReference type="Rhea" id="RHEA:23956"/>
        <dbReference type="Rhea" id="RHEA-COMP:9863"/>
        <dbReference type="Rhea" id="RHEA-COMP:12788"/>
        <dbReference type="ChEBI" id="CHEBI:15378"/>
        <dbReference type="ChEBI" id="CHEBI:29999"/>
        <dbReference type="ChEBI" id="CHEBI:53604"/>
        <dbReference type="ChEBI" id="CHEBI:58223"/>
        <dbReference type="ChEBI" id="CHEBI:67138"/>
        <dbReference type="EC" id="2.4.1.41"/>
    </reaction>
</comment>
<comment type="catalytic activity">
    <reaction>
        <text>L-threonyl-[protein] + UDP-N-acetyl-alpha-D-galactosamine = a 3-O-[N-acetyl-alpha-D-galactosaminyl]-L-threonyl-[protein] + UDP + H(+)</text>
        <dbReference type="Rhea" id="RHEA:52424"/>
        <dbReference type="Rhea" id="RHEA-COMP:11060"/>
        <dbReference type="Rhea" id="RHEA-COMP:11689"/>
        <dbReference type="ChEBI" id="CHEBI:15378"/>
        <dbReference type="ChEBI" id="CHEBI:30013"/>
        <dbReference type="ChEBI" id="CHEBI:58223"/>
        <dbReference type="ChEBI" id="CHEBI:67138"/>
        <dbReference type="ChEBI" id="CHEBI:87075"/>
        <dbReference type="EC" id="2.4.1.41"/>
    </reaction>
</comment>
<comment type="cofactor">
    <cofactor evidence="1">
        <name>Mn(2+)</name>
        <dbReference type="ChEBI" id="CHEBI:29035"/>
    </cofactor>
</comment>
<comment type="pathway">
    <text>Protein modification; protein glycosylation.</text>
</comment>
<comment type="subcellular location">
    <subcellularLocation>
        <location evidence="1">Golgi apparatus membrane</location>
        <topology evidence="1">Single-pass type II membrane protein</topology>
    </subcellularLocation>
</comment>
<comment type="tissue specificity">
    <text evidence="5">In the CNS, it is predominantly expressed in several distinct hypothalamic, thalamic and amygdaloid nuclei. The most abundant level of expression is in the paraventricular, ventromedial and arcuate nuclei of the hypothalamus, the anterodorsal and parafascicular nuclei of the thalamus and the central, basomedial and medial nuclei of the amygdala. Also expressed in cerebral cortex, lateral septum, habenula and hippocampus.</text>
</comment>
<comment type="domain">
    <text evidence="1">There are two conserved domains in the glycosyltransferase region: the N-terminal domain (domain A, also called GT1 motif), which is probably involved in manganese coordination and substrate binding and the C-terminal domain (domain B, also called Gal/GalNAc-T motif), which is probably involved in catalytic reaction and UDP-Gal binding.</text>
</comment>
<comment type="domain">
    <text evidence="1">The ricin B-type lectin domain binds to GalNAc and contributes to the glycopeptide specificity.</text>
</comment>
<comment type="similarity">
    <text evidence="6">Belongs to the glycosyltransferase 2 family. GalNAc-T subfamily.</text>
</comment>
<comment type="caution">
    <text evidence="7">Was originally termed Galnt10/pp-GaNTase 10.</text>
</comment>
<comment type="online information" name="Functional Glycomics Gateway - GTase">
    <link uri="http://www.functionalglycomics.org/glycomics/molecule/jsp/glycoEnzyme/viewGlycoEnzyme.jsp?gbpId=gt_mou_524"/>
    <text>Putative polypeptide N-acetylgalactosaminyltransferase-like protein 1</text>
</comment>
<accession>Q9JJ61</accession>
<accession>Q60GT0</accession>
<protein>
    <recommendedName>
        <fullName>Polypeptide N-acetylgalactosaminyltransferase 16</fullName>
        <ecNumber>2.4.1.41</ecNumber>
    </recommendedName>
    <alternativeName>
        <fullName>Polypeptide GalNAc transferase 16</fullName>
        <shortName>GalNAc-T16</shortName>
    </alternativeName>
    <alternativeName>
        <fullName>Polypeptide GalNAc transferase-like protein 1</fullName>
        <shortName>GalNAc-T-like protein 1</shortName>
        <shortName>pp-GaNTase-like protein 1</shortName>
    </alternativeName>
    <alternativeName>
        <fullName>Polypeptide N-acetylgalactosaminyltransferase-like protein 1</fullName>
    </alternativeName>
    <alternativeName>
        <fullName>Protein-UDP acetylgalactosaminyltransferase-like protein 1</fullName>
    </alternativeName>
    <alternativeName>
        <fullName>UDP-GalNAc:polypeptide N-acetylgalactosaminyltransferase-like protein 1</fullName>
    </alternativeName>
</protein>
<sequence>MRKIRANAIAILTVAWILGTFYYLWQDNRAHAASSSGRGAQRAGGRPEQLREDRTIPLIVTGTPSKGFDEKAYLSAKQLKPGEDPYRQHAFNQLESDKLSSDRPIRDTRHYSCPSLSYSSDLPATSVIITFHNEARSTLLRTVKSVLNRTPASLIQEIILVDDFSSDPEDCLLLTRIPKVKCLRNDKREGLIRSRVRGADVAGATVLTFLDSHCEVNVEWLQPMLQRVMEDHTRVVSPIIDVISLDNFAYLAASADLRGGFDWSLHFKWEQIPLEQKMTRTDPTKPIRTPVIAGGIFVIDKSWFNHLGKYDAQMDIWGGENFELSFRVWMCGGSLEIVPCSRVGHVFRKRHPYNFPEGNALTYIRNTKRTAEVWMDEYKQYYYEARPSAIGKAFGSVATRIEQRKKMDCKSFRWYLENVYPELTVPVKEVLPGVIKQGVNCLESQGQNTAGDLLLGMGICRGSAKSPPPAQAWLFSDHLIQQQGKCLAATSTLMSSPGSPVILQTCNPKEGKQKWRRKGSFIQHSVSGLCLETKPAQLVTSKCQTDAQAQQWQLLPHT</sequence>
<evidence type="ECO:0000250" key="1"/>
<evidence type="ECO:0000255" key="2"/>
<evidence type="ECO:0000255" key="3">
    <source>
        <dbReference type="PROSITE-ProRule" id="PRU00174"/>
    </source>
</evidence>
<evidence type="ECO:0000256" key="4">
    <source>
        <dbReference type="SAM" id="MobiDB-lite"/>
    </source>
</evidence>
<evidence type="ECO:0000269" key="5">
    <source>
    </source>
</evidence>
<evidence type="ECO:0000305" key="6"/>
<evidence type="ECO:0000305" key="7">
    <source>
    </source>
</evidence>
<gene>
    <name type="primary">Galnt16</name>
    <name type="synonym">Galntl1</name>
</gene>
<reference key="1">
    <citation type="submission" date="2000-06" db="EMBL/GenBank/DDBJ databases">
        <authorList>
            <person name="Osada N."/>
            <person name="Kusuda J."/>
            <person name="Tanuma R."/>
            <person name="Ito A."/>
            <person name="Hirata M."/>
            <person name="Sugano S."/>
            <person name="Hashimoto K."/>
        </authorList>
    </citation>
    <scope>NUCLEOTIDE SEQUENCE [MRNA]</scope>
    <source>
        <tissue>Brain</tissue>
    </source>
</reference>
<reference key="2">
    <citation type="submission" date="2004-03" db="EMBL/GenBank/DDBJ databases">
        <title>Mouse UDP-N-acetyl-alpha-D-galactosamine:polypeptide N-acetylgalactosaminyltransferase, mpp-GalNAc-T16.</title>
        <authorList>
            <person name="Zhang Y."/>
            <person name="Kwon Y."/>
            <person name="Kikuchi N."/>
            <person name="Narimatsu H."/>
        </authorList>
    </citation>
    <scope>NUCLEOTIDE SEQUENCE [MRNA]</scope>
</reference>
<reference key="3">
    <citation type="journal article" date="2005" name="Science">
        <title>The transcriptional landscape of the mammalian genome.</title>
        <authorList>
            <person name="Carninci P."/>
            <person name="Kasukawa T."/>
            <person name="Katayama S."/>
            <person name="Gough J."/>
            <person name="Frith M.C."/>
            <person name="Maeda N."/>
            <person name="Oyama R."/>
            <person name="Ravasi T."/>
            <person name="Lenhard B."/>
            <person name="Wells C."/>
            <person name="Kodzius R."/>
            <person name="Shimokawa K."/>
            <person name="Bajic V.B."/>
            <person name="Brenner S.E."/>
            <person name="Batalov S."/>
            <person name="Forrest A.R."/>
            <person name="Zavolan M."/>
            <person name="Davis M.J."/>
            <person name="Wilming L.G."/>
            <person name="Aidinis V."/>
            <person name="Allen J.E."/>
            <person name="Ambesi-Impiombato A."/>
            <person name="Apweiler R."/>
            <person name="Aturaliya R.N."/>
            <person name="Bailey T.L."/>
            <person name="Bansal M."/>
            <person name="Baxter L."/>
            <person name="Beisel K.W."/>
            <person name="Bersano T."/>
            <person name="Bono H."/>
            <person name="Chalk A.M."/>
            <person name="Chiu K.P."/>
            <person name="Choudhary V."/>
            <person name="Christoffels A."/>
            <person name="Clutterbuck D.R."/>
            <person name="Crowe M.L."/>
            <person name="Dalla E."/>
            <person name="Dalrymple B.P."/>
            <person name="de Bono B."/>
            <person name="Della Gatta G."/>
            <person name="di Bernardo D."/>
            <person name="Down T."/>
            <person name="Engstrom P."/>
            <person name="Fagiolini M."/>
            <person name="Faulkner G."/>
            <person name="Fletcher C.F."/>
            <person name="Fukushima T."/>
            <person name="Furuno M."/>
            <person name="Futaki S."/>
            <person name="Gariboldi M."/>
            <person name="Georgii-Hemming P."/>
            <person name="Gingeras T.R."/>
            <person name="Gojobori T."/>
            <person name="Green R.E."/>
            <person name="Gustincich S."/>
            <person name="Harbers M."/>
            <person name="Hayashi Y."/>
            <person name="Hensch T.K."/>
            <person name="Hirokawa N."/>
            <person name="Hill D."/>
            <person name="Huminiecki L."/>
            <person name="Iacono M."/>
            <person name="Ikeo K."/>
            <person name="Iwama A."/>
            <person name="Ishikawa T."/>
            <person name="Jakt M."/>
            <person name="Kanapin A."/>
            <person name="Katoh M."/>
            <person name="Kawasawa Y."/>
            <person name="Kelso J."/>
            <person name="Kitamura H."/>
            <person name="Kitano H."/>
            <person name="Kollias G."/>
            <person name="Krishnan S.P."/>
            <person name="Kruger A."/>
            <person name="Kummerfeld S.K."/>
            <person name="Kurochkin I.V."/>
            <person name="Lareau L.F."/>
            <person name="Lazarevic D."/>
            <person name="Lipovich L."/>
            <person name="Liu J."/>
            <person name="Liuni S."/>
            <person name="McWilliam S."/>
            <person name="Madan Babu M."/>
            <person name="Madera M."/>
            <person name="Marchionni L."/>
            <person name="Matsuda H."/>
            <person name="Matsuzawa S."/>
            <person name="Miki H."/>
            <person name="Mignone F."/>
            <person name="Miyake S."/>
            <person name="Morris K."/>
            <person name="Mottagui-Tabar S."/>
            <person name="Mulder N."/>
            <person name="Nakano N."/>
            <person name="Nakauchi H."/>
            <person name="Ng P."/>
            <person name="Nilsson R."/>
            <person name="Nishiguchi S."/>
            <person name="Nishikawa S."/>
            <person name="Nori F."/>
            <person name="Ohara O."/>
            <person name="Okazaki Y."/>
            <person name="Orlando V."/>
            <person name="Pang K.C."/>
            <person name="Pavan W.J."/>
            <person name="Pavesi G."/>
            <person name="Pesole G."/>
            <person name="Petrovsky N."/>
            <person name="Piazza S."/>
            <person name="Reed J."/>
            <person name="Reid J.F."/>
            <person name="Ring B.Z."/>
            <person name="Ringwald M."/>
            <person name="Rost B."/>
            <person name="Ruan Y."/>
            <person name="Salzberg S.L."/>
            <person name="Sandelin A."/>
            <person name="Schneider C."/>
            <person name="Schoenbach C."/>
            <person name="Sekiguchi K."/>
            <person name="Semple C.A."/>
            <person name="Seno S."/>
            <person name="Sessa L."/>
            <person name="Sheng Y."/>
            <person name="Shibata Y."/>
            <person name="Shimada H."/>
            <person name="Shimada K."/>
            <person name="Silva D."/>
            <person name="Sinclair B."/>
            <person name="Sperling S."/>
            <person name="Stupka E."/>
            <person name="Sugiura K."/>
            <person name="Sultana R."/>
            <person name="Takenaka Y."/>
            <person name="Taki K."/>
            <person name="Tammoja K."/>
            <person name="Tan S.L."/>
            <person name="Tang S."/>
            <person name="Taylor M.S."/>
            <person name="Tegner J."/>
            <person name="Teichmann S.A."/>
            <person name="Ueda H.R."/>
            <person name="van Nimwegen E."/>
            <person name="Verardo R."/>
            <person name="Wei C.L."/>
            <person name="Yagi K."/>
            <person name="Yamanishi H."/>
            <person name="Zabarovsky E."/>
            <person name="Zhu S."/>
            <person name="Zimmer A."/>
            <person name="Hide W."/>
            <person name="Bult C."/>
            <person name="Grimmond S.M."/>
            <person name="Teasdale R.D."/>
            <person name="Liu E.T."/>
            <person name="Brusic V."/>
            <person name="Quackenbush J."/>
            <person name="Wahlestedt C."/>
            <person name="Mattick J.S."/>
            <person name="Hume D.A."/>
            <person name="Kai C."/>
            <person name="Sasaki D."/>
            <person name="Tomaru Y."/>
            <person name="Fukuda S."/>
            <person name="Kanamori-Katayama M."/>
            <person name="Suzuki M."/>
            <person name="Aoki J."/>
            <person name="Arakawa T."/>
            <person name="Iida J."/>
            <person name="Imamura K."/>
            <person name="Itoh M."/>
            <person name="Kato T."/>
            <person name="Kawaji H."/>
            <person name="Kawagashira N."/>
            <person name="Kawashima T."/>
            <person name="Kojima M."/>
            <person name="Kondo S."/>
            <person name="Konno H."/>
            <person name="Nakano K."/>
            <person name="Ninomiya N."/>
            <person name="Nishio T."/>
            <person name="Okada M."/>
            <person name="Plessy C."/>
            <person name="Shibata K."/>
            <person name="Shiraki T."/>
            <person name="Suzuki S."/>
            <person name="Tagami M."/>
            <person name="Waki K."/>
            <person name="Watahiki A."/>
            <person name="Okamura-Oho Y."/>
            <person name="Suzuki H."/>
            <person name="Kawai J."/>
            <person name="Hayashizaki Y."/>
        </authorList>
    </citation>
    <scope>NUCLEOTIDE SEQUENCE [LARGE SCALE MRNA]</scope>
    <source>
        <strain>C57BL/6J</strain>
        <tissue>Thymus</tissue>
    </source>
</reference>
<reference key="4">
    <citation type="journal article" date="2004" name="Genome Res.">
        <title>The status, quality, and expansion of the NIH full-length cDNA project: the Mammalian Gene Collection (MGC).</title>
        <authorList>
            <consortium name="The MGC Project Team"/>
        </authorList>
    </citation>
    <scope>NUCLEOTIDE SEQUENCE [LARGE SCALE MRNA]</scope>
</reference>
<reference key="5">
    <citation type="journal article" date="2002" name="Gene Expr. Patterns">
        <title>A new UDP-GalNAc:polypeptide N-acetylgalactosaminyltransferase mRNA exhibits predominant expression in the hypothalamus, thalamus and amygdala of mouse forebrain.</title>
        <authorList>
            <person name="Nelson P.A."/>
            <person name="Sutcliffe J.G."/>
            <person name="Thomas E.A."/>
        </authorList>
    </citation>
    <scope>TISSUE SPECIFICITY</scope>
</reference>
<name>GLT16_MOUSE</name>
<feature type="chain" id="PRO_0000059136" description="Polypeptide N-acetylgalactosaminyltransferase 16">
    <location>
        <begin position="1"/>
        <end position="558"/>
    </location>
</feature>
<feature type="topological domain" description="Cytoplasmic" evidence="2">
    <location>
        <begin position="1"/>
        <end position="6"/>
    </location>
</feature>
<feature type="transmembrane region" description="Helical; Signal-anchor for type II membrane protein" evidence="2">
    <location>
        <begin position="7"/>
        <end position="26"/>
    </location>
</feature>
<feature type="topological domain" description="Lumenal" evidence="2">
    <location>
        <begin position="27"/>
        <end position="558"/>
    </location>
</feature>
<feature type="domain" description="Ricin B-type lectin" evidence="3">
    <location>
        <begin position="428"/>
        <end position="555"/>
    </location>
</feature>
<feature type="region of interest" description="Disordered" evidence="4">
    <location>
        <begin position="34"/>
        <end position="53"/>
    </location>
</feature>
<feature type="region of interest" description="Catalytic subdomain A">
    <location>
        <begin position="122"/>
        <end position="227"/>
    </location>
</feature>
<feature type="region of interest" description="Catalytic subdomain B">
    <location>
        <begin position="286"/>
        <end position="348"/>
    </location>
</feature>
<feature type="compositionally biased region" description="Low complexity" evidence="4">
    <location>
        <begin position="34"/>
        <end position="46"/>
    </location>
</feature>
<feature type="binding site" evidence="1">
    <location>
        <position position="163"/>
    </location>
    <ligand>
        <name>substrate</name>
    </ligand>
</feature>
<feature type="binding site" evidence="1">
    <location>
        <position position="188"/>
    </location>
    <ligand>
        <name>substrate</name>
    </ligand>
</feature>
<feature type="binding site" evidence="1">
    <location>
        <position position="211"/>
    </location>
    <ligand>
        <name>Mn(2+)</name>
        <dbReference type="ChEBI" id="CHEBI:29035"/>
    </ligand>
</feature>
<feature type="binding site" evidence="1">
    <location>
        <position position="212"/>
    </location>
    <ligand>
        <name>substrate</name>
    </ligand>
</feature>
<feature type="binding site" evidence="1">
    <location>
        <position position="213"/>
    </location>
    <ligand>
        <name>Mn(2+)</name>
        <dbReference type="ChEBI" id="CHEBI:29035"/>
    </ligand>
</feature>
<feature type="binding site" evidence="1">
    <location>
        <position position="317"/>
    </location>
    <ligand>
        <name>substrate</name>
    </ligand>
</feature>
<feature type="binding site" evidence="1">
    <location>
        <position position="345"/>
    </location>
    <ligand>
        <name>Mn(2+)</name>
        <dbReference type="ChEBI" id="CHEBI:29035"/>
    </ligand>
</feature>
<feature type="binding site" evidence="1">
    <location>
        <position position="348"/>
    </location>
    <ligand>
        <name>substrate</name>
    </ligand>
</feature>
<feature type="binding site" evidence="1">
    <location>
        <position position="351"/>
    </location>
    <ligand>
        <name>substrate</name>
    </ligand>
</feature>
<feature type="binding site" evidence="1">
    <location>
        <position position="353"/>
    </location>
    <ligand>
        <name>substrate</name>
    </ligand>
</feature>
<feature type="disulfide bond" evidence="3">
    <location>
        <begin position="113"/>
        <end position="340"/>
    </location>
</feature>
<feature type="disulfide bond" evidence="3">
    <location>
        <begin position="331"/>
        <end position="409"/>
    </location>
</feature>
<feature type="disulfide bond" evidence="3">
    <location>
        <begin position="441"/>
        <end position="460"/>
    </location>
</feature>
<feature type="disulfide bond" evidence="3">
    <location>
        <begin position="486"/>
        <end position="506"/>
    </location>
</feature>
<feature type="disulfide bond" evidence="3">
    <location>
        <begin position="530"/>
        <end position="543"/>
    </location>
</feature>
<feature type="sequence conflict" description="In Ref. 1; BAA97985." evidence="6" ref="1">
    <original>K</original>
    <variation>E</variation>
    <location>
        <position position="71"/>
    </location>
</feature>
<feature type="sequence conflict" description="In Ref. 1; BAA97985." evidence="6" ref="1">
    <original>G</original>
    <variation>R</variation>
    <location>
        <position position="198"/>
    </location>
</feature>
<feature type="sequence conflict" description="In Ref. 1; BAA97985." evidence="6" ref="1">
    <original>P</original>
    <variation>L</variation>
    <location>
        <position position="283"/>
    </location>
</feature>
<feature type="sequence conflict" description="In Ref. 1; BAA97985." evidence="6" ref="1">
    <original>K</original>
    <variation>R</variation>
    <location>
        <position position="518"/>
    </location>
</feature>
<proteinExistence type="evidence at transcript level"/>
<dbReference type="EC" id="2.4.1.41"/>
<dbReference type="EMBL" id="AB045325">
    <property type="protein sequence ID" value="BAA97985.1"/>
    <property type="molecule type" value="mRNA"/>
</dbReference>
<dbReference type="EMBL" id="AB175683">
    <property type="protein sequence ID" value="BAD52071.1"/>
    <property type="molecule type" value="mRNA"/>
</dbReference>
<dbReference type="EMBL" id="AK138883">
    <property type="protein sequence ID" value="BAE23810.1"/>
    <property type="molecule type" value="mRNA"/>
</dbReference>
<dbReference type="EMBL" id="BC110634">
    <property type="protein sequence ID" value="AAI10635.1"/>
    <property type="molecule type" value="mRNA"/>
</dbReference>
<dbReference type="EMBL" id="BC125015">
    <property type="protein sequence ID" value="AAI25016.1"/>
    <property type="molecule type" value="mRNA"/>
</dbReference>
<dbReference type="CCDS" id="CCDS36482.1"/>
<dbReference type="RefSeq" id="NP_001074890.1">
    <property type="nucleotide sequence ID" value="NM_001081421.2"/>
</dbReference>
<dbReference type="RefSeq" id="NP_001348629.1">
    <property type="nucleotide sequence ID" value="NM_001361700.1"/>
</dbReference>
<dbReference type="RefSeq" id="NP_001348630.1">
    <property type="nucleotide sequence ID" value="NM_001361701.1"/>
</dbReference>
<dbReference type="SMR" id="Q9JJ61"/>
<dbReference type="BioGRID" id="224406">
    <property type="interactions" value="1"/>
</dbReference>
<dbReference type="FunCoup" id="Q9JJ61">
    <property type="interactions" value="372"/>
</dbReference>
<dbReference type="STRING" id="10090.ENSMUSP00000151829"/>
<dbReference type="CAZy" id="CBM13">
    <property type="family name" value="Carbohydrate-Binding Module Family 13"/>
</dbReference>
<dbReference type="CAZy" id="GT27">
    <property type="family name" value="Glycosyltransferase Family 27"/>
</dbReference>
<dbReference type="iPTMnet" id="Q9JJ61"/>
<dbReference type="PhosphoSitePlus" id="Q9JJ61"/>
<dbReference type="PaxDb" id="10090-ENSMUSP00000021558"/>
<dbReference type="ProteomicsDB" id="263375"/>
<dbReference type="Antibodypedia" id="25033">
    <property type="antibodies" value="62 antibodies from 16 providers"/>
</dbReference>
<dbReference type="Ensembl" id="ENSMUST00000021558.8">
    <property type="protein sequence ID" value="ENSMUSP00000021558.7"/>
    <property type="gene ID" value="ENSMUSG00000021130.9"/>
</dbReference>
<dbReference type="Ensembl" id="ENSMUST00000218943.2">
    <property type="protein sequence ID" value="ENSMUSP00000151619.2"/>
    <property type="gene ID" value="ENSMUSG00000021130.9"/>
</dbReference>
<dbReference type="Ensembl" id="ENSMUST00000219993.2">
    <property type="protein sequence ID" value="ENSMUSP00000151829.2"/>
    <property type="gene ID" value="ENSMUSG00000021130.9"/>
</dbReference>
<dbReference type="GeneID" id="108760"/>
<dbReference type="KEGG" id="mmu:108760"/>
<dbReference type="UCSC" id="uc007oaw.1">
    <property type="organism name" value="mouse"/>
</dbReference>
<dbReference type="AGR" id="MGI:1917754"/>
<dbReference type="CTD" id="57452"/>
<dbReference type="MGI" id="MGI:1917754">
    <property type="gene designation" value="Galnt16"/>
</dbReference>
<dbReference type="VEuPathDB" id="HostDB:ENSMUSG00000021130"/>
<dbReference type="eggNOG" id="KOG3738">
    <property type="taxonomic scope" value="Eukaryota"/>
</dbReference>
<dbReference type="GeneTree" id="ENSGT00940000158846"/>
<dbReference type="HOGENOM" id="CLU_013477_0_2_1"/>
<dbReference type="InParanoid" id="Q9JJ61"/>
<dbReference type="OMA" id="LGQQWEL"/>
<dbReference type="OrthoDB" id="429263at2759"/>
<dbReference type="PhylomeDB" id="Q9JJ61"/>
<dbReference type="TreeFam" id="TF313267"/>
<dbReference type="Reactome" id="R-MMU-913709">
    <property type="pathway name" value="O-linked glycosylation of mucins"/>
</dbReference>
<dbReference type="UniPathway" id="UPA00378"/>
<dbReference type="BioGRID-ORCS" id="108760">
    <property type="hits" value="2 hits in 78 CRISPR screens"/>
</dbReference>
<dbReference type="ChiTaRS" id="Galnt16">
    <property type="organism name" value="mouse"/>
</dbReference>
<dbReference type="PRO" id="PR:Q9JJ61"/>
<dbReference type="Proteomes" id="UP000000589">
    <property type="component" value="Chromosome 12"/>
</dbReference>
<dbReference type="RNAct" id="Q9JJ61">
    <property type="molecule type" value="protein"/>
</dbReference>
<dbReference type="Bgee" id="ENSMUSG00000021130">
    <property type="expression patterns" value="Expressed in ventromedial nucleus of hypothalamus and 168 other cell types or tissues"/>
</dbReference>
<dbReference type="ExpressionAtlas" id="Q9JJ61">
    <property type="expression patterns" value="baseline and differential"/>
</dbReference>
<dbReference type="GO" id="GO:0000139">
    <property type="term" value="C:Golgi membrane"/>
    <property type="evidence" value="ECO:0007669"/>
    <property type="project" value="UniProtKB-SubCell"/>
</dbReference>
<dbReference type="GO" id="GO:0030246">
    <property type="term" value="F:carbohydrate binding"/>
    <property type="evidence" value="ECO:0007669"/>
    <property type="project" value="UniProtKB-KW"/>
</dbReference>
<dbReference type="GO" id="GO:0046872">
    <property type="term" value="F:metal ion binding"/>
    <property type="evidence" value="ECO:0007669"/>
    <property type="project" value="UniProtKB-KW"/>
</dbReference>
<dbReference type="GO" id="GO:0004653">
    <property type="term" value="F:polypeptide N-acetylgalactosaminyltransferase activity"/>
    <property type="evidence" value="ECO:0007669"/>
    <property type="project" value="UniProtKB-EC"/>
</dbReference>
<dbReference type="GO" id="GO:0018242">
    <property type="term" value="P:protein O-linked glycosylation via serine"/>
    <property type="evidence" value="ECO:0007669"/>
    <property type="project" value="Ensembl"/>
</dbReference>
<dbReference type="GO" id="GO:0018243">
    <property type="term" value="P:protein O-linked glycosylation via threonine"/>
    <property type="evidence" value="ECO:0007669"/>
    <property type="project" value="Ensembl"/>
</dbReference>
<dbReference type="CDD" id="cd23479">
    <property type="entry name" value="beta-trefoil_Ricin_GALNT16"/>
    <property type="match status" value="1"/>
</dbReference>
<dbReference type="CDD" id="cd02510">
    <property type="entry name" value="pp-GalNAc-T"/>
    <property type="match status" value="1"/>
</dbReference>
<dbReference type="FunFam" id="2.80.10.50:FF:000041">
    <property type="entry name" value="Polypeptide N-acetylgalactosaminyltransferase"/>
    <property type="match status" value="1"/>
</dbReference>
<dbReference type="FunFam" id="3.90.550.10:FF:000020">
    <property type="entry name" value="Polypeptide N-acetylgalactosaminyltransferase"/>
    <property type="match status" value="1"/>
</dbReference>
<dbReference type="Gene3D" id="2.80.10.50">
    <property type="match status" value="1"/>
</dbReference>
<dbReference type="Gene3D" id="3.90.550.10">
    <property type="entry name" value="Spore Coat Polysaccharide Biosynthesis Protein SpsA, Chain A"/>
    <property type="match status" value="1"/>
</dbReference>
<dbReference type="InterPro" id="IPR045885">
    <property type="entry name" value="GalNAc-T"/>
</dbReference>
<dbReference type="InterPro" id="IPR001173">
    <property type="entry name" value="Glyco_trans_2-like"/>
</dbReference>
<dbReference type="InterPro" id="IPR029044">
    <property type="entry name" value="Nucleotide-diphossugar_trans"/>
</dbReference>
<dbReference type="InterPro" id="IPR035992">
    <property type="entry name" value="Ricin_B-like_lectins"/>
</dbReference>
<dbReference type="InterPro" id="IPR000772">
    <property type="entry name" value="Ricin_B_lectin"/>
</dbReference>
<dbReference type="PANTHER" id="PTHR11675">
    <property type="entry name" value="N-ACETYLGALACTOSAMINYLTRANSFERASE"/>
    <property type="match status" value="1"/>
</dbReference>
<dbReference type="PANTHER" id="PTHR11675:SF3">
    <property type="entry name" value="POLYPEPTIDE N-ACETYLGALACTOSAMINYLTRANSFERASE 16"/>
    <property type="match status" value="1"/>
</dbReference>
<dbReference type="Pfam" id="PF00535">
    <property type="entry name" value="Glycos_transf_2"/>
    <property type="match status" value="1"/>
</dbReference>
<dbReference type="Pfam" id="PF00652">
    <property type="entry name" value="Ricin_B_lectin"/>
    <property type="match status" value="1"/>
</dbReference>
<dbReference type="SMART" id="SM00458">
    <property type="entry name" value="RICIN"/>
    <property type="match status" value="1"/>
</dbReference>
<dbReference type="SUPFAM" id="SSF53448">
    <property type="entry name" value="Nucleotide-diphospho-sugar transferases"/>
    <property type="match status" value="1"/>
</dbReference>
<dbReference type="SUPFAM" id="SSF50370">
    <property type="entry name" value="Ricin B-like lectins"/>
    <property type="match status" value="1"/>
</dbReference>
<dbReference type="PROSITE" id="PS50231">
    <property type="entry name" value="RICIN_B_LECTIN"/>
    <property type="match status" value="1"/>
</dbReference>
<keyword id="KW-1015">Disulfide bond</keyword>
<keyword id="KW-0328">Glycosyltransferase</keyword>
<keyword id="KW-0333">Golgi apparatus</keyword>
<keyword id="KW-0430">Lectin</keyword>
<keyword id="KW-0464">Manganese</keyword>
<keyword id="KW-0472">Membrane</keyword>
<keyword id="KW-0479">Metal-binding</keyword>
<keyword id="KW-1185">Reference proteome</keyword>
<keyword id="KW-0735">Signal-anchor</keyword>
<keyword id="KW-0808">Transferase</keyword>
<keyword id="KW-0812">Transmembrane</keyword>
<keyword id="KW-1133">Transmembrane helix</keyword>